<accession>B8GNX3</accession>
<name>DAPB_THISH</name>
<sequence>MTNICIVGAGGRMGRTLIEAIQQAEGLDLTVATERAGSSLIGADAGELAGVGRLGVAISEDPAAQVAAFDVLIDFTRPEGTLAHLEICRKAGRAMVIGTTGFTEAQKQTIREAAKEIPVVFAPNMSVGVNLCLKLLDLAARVLGDEVDIEVIEAHHRHKVDAPSGTALRMGEVVAEALGRDLAQCAVYGREGHTGERERKTIGFETIRAGDIVGEHTVMFAGIGERVEITHKASSRMTFAKGAVRAAAWLKGRSAGLYDMQDVLDLR</sequence>
<proteinExistence type="inferred from homology"/>
<organism>
    <name type="scientific">Thioalkalivibrio sulfidiphilus (strain HL-EbGR7)</name>
    <dbReference type="NCBI Taxonomy" id="396588"/>
    <lineage>
        <taxon>Bacteria</taxon>
        <taxon>Pseudomonadati</taxon>
        <taxon>Pseudomonadota</taxon>
        <taxon>Gammaproteobacteria</taxon>
        <taxon>Chromatiales</taxon>
        <taxon>Ectothiorhodospiraceae</taxon>
        <taxon>Thioalkalivibrio</taxon>
    </lineage>
</organism>
<evidence type="ECO:0000255" key="1">
    <source>
        <dbReference type="HAMAP-Rule" id="MF_00102"/>
    </source>
</evidence>
<evidence type="ECO:0000305" key="2"/>
<protein>
    <recommendedName>
        <fullName evidence="1">4-hydroxy-tetrahydrodipicolinate reductase</fullName>
        <shortName evidence="1">HTPA reductase</shortName>
        <ecNumber evidence="1">1.17.1.8</ecNumber>
    </recommendedName>
</protein>
<gene>
    <name evidence="1" type="primary">dapB</name>
    <name type="ordered locus">Tgr7_0974</name>
</gene>
<keyword id="KW-0028">Amino-acid biosynthesis</keyword>
<keyword id="KW-0963">Cytoplasm</keyword>
<keyword id="KW-0220">Diaminopimelate biosynthesis</keyword>
<keyword id="KW-0457">Lysine biosynthesis</keyword>
<keyword id="KW-0520">NAD</keyword>
<keyword id="KW-0521">NADP</keyword>
<keyword id="KW-0560">Oxidoreductase</keyword>
<keyword id="KW-1185">Reference proteome</keyword>
<dbReference type="EC" id="1.17.1.8" evidence="1"/>
<dbReference type="EMBL" id="CP001339">
    <property type="protein sequence ID" value="ACL72062.1"/>
    <property type="molecule type" value="Genomic_DNA"/>
</dbReference>
<dbReference type="RefSeq" id="WP_012637546.1">
    <property type="nucleotide sequence ID" value="NC_011901.1"/>
</dbReference>
<dbReference type="SMR" id="B8GNX3"/>
<dbReference type="STRING" id="396588.Tgr7_0974"/>
<dbReference type="KEGG" id="tgr:Tgr7_0974"/>
<dbReference type="eggNOG" id="COG0289">
    <property type="taxonomic scope" value="Bacteria"/>
</dbReference>
<dbReference type="HOGENOM" id="CLU_047479_2_1_6"/>
<dbReference type="OrthoDB" id="9790352at2"/>
<dbReference type="UniPathway" id="UPA00034">
    <property type="reaction ID" value="UER00018"/>
</dbReference>
<dbReference type="Proteomes" id="UP000002383">
    <property type="component" value="Chromosome"/>
</dbReference>
<dbReference type="GO" id="GO:0005829">
    <property type="term" value="C:cytosol"/>
    <property type="evidence" value="ECO:0007669"/>
    <property type="project" value="TreeGrafter"/>
</dbReference>
<dbReference type="GO" id="GO:0008839">
    <property type="term" value="F:4-hydroxy-tetrahydrodipicolinate reductase"/>
    <property type="evidence" value="ECO:0007669"/>
    <property type="project" value="UniProtKB-EC"/>
</dbReference>
<dbReference type="GO" id="GO:0051287">
    <property type="term" value="F:NAD binding"/>
    <property type="evidence" value="ECO:0007669"/>
    <property type="project" value="UniProtKB-UniRule"/>
</dbReference>
<dbReference type="GO" id="GO:0050661">
    <property type="term" value="F:NADP binding"/>
    <property type="evidence" value="ECO:0007669"/>
    <property type="project" value="UniProtKB-UniRule"/>
</dbReference>
<dbReference type="GO" id="GO:0016726">
    <property type="term" value="F:oxidoreductase activity, acting on CH or CH2 groups, NAD or NADP as acceptor"/>
    <property type="evidence" value="ECO:0007669"/>
    <property type="project" value="UniProtKB-UniRule"/>
</dbReference>
<dbReference type="GO" id="GO:0019877">
    <property type="term" value="P:diaminopimelate biosynthetic process"/>
    <property type="evidence" value="ECO:0007669"/>
    <property type="project" value="UniProtKB-UniRule"/>
</dbReference>
<dbReference type="GO" id="GO:0009089">
    <property type="term" value="P:lysine biosynthetic process via diaminopimelate"/>
    <property type="evidence" value="ECO:0007669"/>
    <property type="project" value="UniProtKB-UniRule"/>
</dbReference>
<dbReference type="CDD" id="cd02274">
    <property type="entry name" value="DHDPR_N"/>
    <property type="match status" value="1"/>
</dbReference>
<dbReference type="FunFam" id="3.30.360.10:FF:000004">
    <property type="entry name" value="4-hydroxy-tetrahydrodipicolinate reductase"/>
    <property type="match status" value="1"/>
</dbReference>
<dbReference type="FunFam" id="3.40.50.720:FF:000048">
    <property type="entry name" value="4-hydroxy-tetrahydrodipicolinate reductase"/>
    <property type="match status" value="1"/>
</dbReference>
<dbReference type="Gene3D" id="3.30.360.10">
    <property type="entry name" value="Dihydrodipicolinate Reductase, domain 2"/>
    <property type="match status" value="1"/>
</dbReference>
<dbReference type="Gene3D" id="3.40.50.720">
    <property type="entry name" value="NAD(P)-binding Rossmann-like Domain"/>
    <property type="match status" value="1"/>
</dbReference>
<dbReference type="HAMAP" id="MF_00102">
    <property type="entry name" value="DapB"/>
    <property type="match status" value="1"/>
</dbReference>
<dbReference type="InterPro" id="IPR022663">
    <property type="entry name" value="DapB_C"/>
</dbReference>
<dbReference type="InterPro" id="IPR000846">
    <property type="entry name" value="DapB_N"/>
</dbReference>
<dbReference type="InterPro" id="IPR022664">
    <property type="entry name" value="DapB_N_CS"/>
</dbReference>
<dbReference type="InterPro" id="IPR023940">
    <property type="entry name" value="DHDPR_bac"/>
</dbReference>
<dbReference type="InterPro" id="IPR036291">
    <property type="entry name" value="NAD(P)-bd_dom_sf"/>
</dbReference>
<dbReference type="NCBIfam" id="TIGR00036">
    <property type="entry name" value="dapB"/>
    <property type="match status" value="1"/>
</dbReference>
<dbReference type="PANTHER" id="PTHR20836:SF0">
    <property type="entry name" value="4-HYDROXY-TETRAHYDRODIPICOLINATE REDUCTASE 1, CHLOROPLASTIC-RELATED"/>
    <property type="match status" value="1"/>
</dbReference>
<dbReference type="PANTHER" id="PTHR20836">
    <property type="entry name" value="DIHYDRODIPICOLINATE REDUCTASE"/>
    <property type="match status" value="1"/>
</dbReference>
<dbReference type="Pfam" id="PF05173">
    <property type="entry name" value="DapB_C"/>
    <property type="match status" value="1"/>
</dbReference>
<dbReference type="Pfam" id="PF01113">
    <property type="entry name" value="DapB_N"/>
    <property type="match status" value="1"/>
</dbReference>
<dbReference type="PIRSF" id="PIRSF000161">
    <property type="entry name" value="DHPR"/>
    <property type="match status" value="1"/>
</dbReference>
<dbReference type="SUPFAM" id="SSF55347">
    <property type="entry name" value="Glyceraldehyde-3-phosphate dehydrogenase-like, C-terminal domain"/>
    <property type="match status" value="1"/>
</dbReference>
<dbReference type="SUPFAM" id="SSF51735">
    <property type="entry name" value="NAD(P)-binding Rossmann-fold domains"/>
    <property type="match status" value="1"/>
</dbReference>
<dbReference type="PROSITE" id="PS01298">
    <property type="entry name" value="DAPB"/>
    <property type="match status" value="1"/>
</dbReference>
<reference key="1">
    <citation type="journal article" date="2011" name="Stand. Genomic Sci.">
        <title>Complete genome sequence of 'Thioalkalivibrio sulfidophilus' HL-EbGr7.</title>
        <authorList>
            <person name="Muyzer G."/>
            <person name="Sorokin D.Y."/>
            <person name="Mavromatis K."/>
            <person name="Lapidus A."/>
            <person name="Clum A."/>
            <person name="Ivanova N."/>
            <person name="Pati A."/>
            <person name="d'Haeseleer P."/>
            <person name="Woyke T."/>
            <person name="Kyrpides N.C."/>
        </authorList>
    </citation>
    <scope>NUCLEOTIDE SEQUENCE [LARGE SCALE GENOMIC DNA]</scope>
    <source>
        <strain>HL-EbGR7</strain>
    </source>
</reference>
<comment type="function">
    <text evidence="1">Catalyzes the conversion of 4-hydroxy-tetrahydrodipicolinate (HTPA) to tetrahydrodipicolinate.</text>
</comment>
<comment type="catalytic activity">
    <reaction evidence="1">
        <text>(S)-2,3,4,5-tetrahydrodipicolinate + NAD(+) + H2O = (2S,4S)-4-hydroxy-2,3,4,5-tetrahydrodipicolinate + NADH + H(+)</text>
        <dbReference type="Rhea" id="RHEA:35323"/>
        <dbReference type="ChEBI" id="CHEBI:15377"/>
        <dbReference type="ChEBI" id="CHEBI:15378"/>
        <dbReference type="ChEBI" id="CHEBI:16845"/>
        <dbReference type="ChEBI" id="CHEBI:57540"/>
        <dbReference type="ChEBI" id="CHEBI:57945"/>
        <dbReference type="ChEBI" id="CHEBI:67139"/>
        <dbReference type="EC" id="1.17.1.8"/>
    </reaction>
</comment>
<comment type="catalytic activity">
    <reaction evidence="1">
        <text>(S)-2,3,4,5-tetrahydrodipicolinate + NADP(+) + H2O = (2S,4S)-4-hydroxy-2,3,4,5-tetrahydrodipicolinate + NADPH + H(+)</text>
        <dbReference type="Rhea" id="RHEA:35331"/>
        <dbReference type="ChEBI" id="CHEBI:15377"/>
        <dbReference type="ChEBI" id="CHEBI:15378"/>
        <dbReference type="ChEBI" id="CHEBI:16845"/>
        <dbReference type="ChEBI" id="CHEBI:57783"/>
        <dbReference type="ChEBI" id="CHEBI:58349"/>
        <dbReference type="ChEBI" id="CHEBI:67139"/>
        <dbReference type="EC" id="1.17.1.8"/>
    </reaction>
</comment>
<comment type="pathway">
    <text evidence="1">Amino-acid biosynthesis; L-lysine biosynthesis via DAP pathway; (S)-tetrahydrodipicolinate from L-aspartate: step 4/4.</text>
</comment>
<comment type="subcellular location">
    <subcellularLocation>
        <location evidence="1">Cytoplasm</location>
    </subcellularLocation>
</comment>
<comment type="similarity">
    <text evidence="1">Belongs to the DapB family.</text>
</comment>
<comment type="caution">
    <text evidence="2">Was originally thought to be a dihydrodipicolinate reductase (DHDPR), catalyzing the conversion of dihydrodipicolinate to tetrahydrodipicolinate. However, it was shown in E.coli that the substrate of the enzymatic reaction is not dihydrodipicolinate (DHDP) but in fact (2S,4S)-4-hydroxy-2,3,4,5-tetrahydrodipicolinic acid (HTPA), the product released by the DapA-catalyzed reaction.</text>
</comment>
<feature type="chain" id="PRO_1000189764" description="4-hydroxy-tetrahydrodipicolinate reductase">
    <location>
        <begin position="1"/>
        <end position="267"/>
    </location>
</feature>
<feature type="active site" description="Proton donor/acceptor" evidence="1">
    <location>
        <position position="155"/>
    </location>
</feature>
<feature type="active site" description="Proton donor" evidence="1">
    <location>
        <position position="159"/>
    </location>
</feature>
<feature type="binding site" evidence="1">
    <location>
        <begin position="8"/>
        <end position="13"/>
    </location>
    <ligand>
        <name>NAD(+)</name>
        <dbReference type="ChEBI" id="CHEBI:57540"/>
    </ligand>
</feature>
<feature type="binding site" evidence="1">
    <location>
        <position position="34"/>
    </location>
    <ligand>
        <name>NAD(+)</name>
        <dbReference type="ChEBI" id="CHEBI:57540"/>
    </ligand>
</feature>
<feature type="binding site" evidence="1">
    <location>
        <position position="35"/>
    </location>
    <ligand>
        <name>NADP(+)</name>
        <dbReference type="ChEBI" id="CHEBI:58349"/>
    </ligand>
</feature>
<feature type="binding site" evidence="1">
    <location>
        <begin position="98"/>
        <end position="100"/>
    </location>
    <ligand>
        <name>NAD(+)</name>
        <dbReference type="ChEBI" id="CHEBI:57540"/>
    </ligand>
</feature>
<feature type="binding site" evidence="1">
    <location>
        <begin position="122"/>
        <end position="125"/>
    </location>
    <ligand>
        <name>NAD(+)</name>
        <dbReference type="ChEBI" id="CHEBI:57540"/>
    </ligand>
</feature>
<feature type="binding site" evidence="1">
    <location>
        <position position="156"/>
    </location>
    <ligand>
        <name>(S)-2,3,4,5-tetrahydrodipicolinate</name>
        <dbReference type="ChEBI" id="CHEBI:16845"/>
    </ligand>
</feature>
<feature type="binding site" evidence="1">
    <location>
        <begin position="165"/>
        <end position="166"/>
    </location>
    <ligand>
        <name>(S)-2,3,4,5-tetrahydrodipicolinate</name>
        <dbReference type="ChEBI" id="CHEBI:16845"/>
    </ligand>
</feature>